<keyword id="KW-0067">ATP-binding</keyword>
<keyword id="KW-0173">Coenzyme A biosynthesis</keyword>
<keyword id="KW-0963">Cytoplasm</keyword>
<keyword id="KW-0460">Magnesium</keyword>
<keyword id="KW-0547">Nucleotide-binding</keyword>
<keyword id="KW-0548">Nucleotidyltransferase</keyword>
<keyword id="KW-0808">Transferase</keyword>
<protein>
    <recommendedName>
        <fullName evidence="1">Phosphopantetheine adenylyltransferase</fullName>
        <ecNumber evidence="1">2.7.7.3</ecNumber>
    </recommendedName>
    <alternativeName>
        <fullName evidence="1">Dephospho-CoA pyrophosphorylase</fullName>
    </alternativeName>
    <alternativeName>
        <fullName evidence="1">Pantetheine-phosphate adenylyltransferase</fullName>
        <shortName evidence="1">PPAT</shortName>
    </alternativeName>
</protein>
<reference key="1">
    <citation type="journal article" date="2008" name="Environ. Microbiol.">
        <title>The complete genome sequence of Moorella thermoacetica (f. Clostridium thermoaceticum).</title>
        <authorList>
            <person name="Pierce E."/>
            <person name="Xie G."/>
            <person name="Barabote R.D."/>
            <person name="Saunders E."/>
            <person name="Han C.S."/>
            <person name="Detter J.C."/>
            <person name="Richardson P."/>
            <person name="Brettin T.S."/>
            <person name="Das A."/>
            <person name="Ljungdahl L.G."/>
            <person name="Ragsdale S.W."/>
        </authorList>
    </citation>
    <scope>NUCLEOTIDE SEQUENCE [LARGE SCALE GENOMIC DNA]</scope>
    <source>
        <strain>ATCC 39073 / JCM 9320</strain>
    </source>
</reference>
<proteinExistence type="inferred from homology"/>
<evidence type="ECO:0000255" key="1">
    <source>
        <dbReference type="HAMAP-Rule" id="MF_00151"/>
    </source>
</evidence>
<comment type="function">
    <text evidence="1">Reversibly transfers an adenylyl group from ATP to 4'-phosphopantetheine, yielding dephospho-CoA (dPCoA) and pyrophosphate.</text>
</comment>
<comment type="catalytic activity">
    <reaction evidence="1">
        <text>(R)-4'-phosphopantetheine + ATP + H(+) = 3'-dephospho-CoA + diphosphate</text>
        <dbReference type="Rhea" id="RHEA:19801"/>
        <dbReference type="ChEBI" id="CHEBI:15378"/>
        <dbReference type="ChEBI" id="CHEBI:30616"/>
        <dbReference type="ChEBI" id="CHEBI:33019"/>
        <dbReference type="ChEBI" id="CHEBI:57328"/>
        <dbReference type="ChEBI" id="CHEBI:61723"/>
        <dbReference type="EC" id="2.7.7.3"/>
    </reaction>
</comment>
<comment type="cofactor">
    <cofactor evidence="1">
        <name>Mg(2+)</name>
        <dbReference type="ChEBI" id="CHEBI:18420"/>
    </cofactor>
</comment>
<comment type="pathway">
    <text evidence="1">Cofactor biosynthesis; coenzyme A biosynthesis; CoA from (R)-pantothenate: step 4/5.</text>
</comment>
<comment type="subunit">
    <text evidence="1">Homohexamer.</text>
</comment>
<comment type="subcellular location">
    <subcellularLocation>
        <location evidence="1">Cytoplasm</location>
    </subcellularLocation>
</comment>
<comment type="similarity">
    <text evidence="1">Belongs to the bacterial CoaD family.</text>
</comment>
<dbReference type="EC" id="2.7.7.3" evidence="1"/>
<dbReference type="EMBL" id="CP000232">
    <property type="protein sequence ID" value="ABC20171.1"/>
    <property type="molecule type" value="Genomic_DNA"/>
</dbReference>
<dbReference type="RefSeq" id="YP_430714.1">
    <property type="nucleotide sequence ID" value="NC_007644.1"/>
</dbReference>
<dbReference type="SMR" id="Q2RHB8"/>
<dbReference type="STRING" id="264732.Moth_1871"/>
<dbReference type="EnsemblBacteria" id="ABC20171">
    <property type="protein sequence ID" value="ABC20171"/>
    <property type="gene ID" value="Moth_1871"/>
</dbReference>
<dbReference type="KEGG" id="mta:Moth_1871"/>
<dbReference type="PATRIC" id="fig|264732.11.peg.2027"/>
<dbReference type="eggNOG" id="COG0669">
    <property type="taxonomic scope" value="Bacteria"/>
</dbReference>
<dbReference type="HOGENOM" id="CLU_100149_0_1_9"/>
<dbReference type="OrthoDB" id="9806661at2"/>
<dbReference type="UniPathway" id="UPA00241">
    <property type="reaction ID" value="UER00355"/>
</dbReference>
<dbReference type="GO" id="GO:0005737">
    <property type="term" value="C:cytoplasm"/>
    <property type="evidence" value="ECO:0007669"/>
    <property type="project" value="UniProtKB-SubCell"/>
</dbReference>
<dbReference type="GO" id="GO:0005524">
    <property type="term" value="F:ATP binding"/>
    <property type="evidence" value="ECO:0007669"/>
    <property type="project" value="UniProtKB-KW"/>
</dbReference>
<dbReference type="GO" id="GO:0004595">
    <property type="term" value="F:pantetheine-phosphate adenylyltransferase activity"/>
    <property type="evidence" value="ECO:0007669"/>
    <property type="project" value="UniProtKB-UniRule"/>
</dbReference>
<dbReference type="GO" id="GO:0015937">
    <property type="term" value="P:coenzyme A biosynthetic process"/>
    <property type="evidence" value="ECO:0007669"/>
    <property type="project" value="UniProtKB-UniRule"/>
</dbReference>
<dbReference type="CDD" id="cd02163">
    <property type="entry name" value="PPAT"/>
    <property type="match status" value="1"/>
</dbReference>
<dbReference type="Gene3D" id="3.40.50.620">
    <property type="entry name" value="HUPs"/>
    <property type="match status" value="1"/>
</dbReference>
<dbReference type="HAMAP" id="MF_00151">
    <property type="entry name" value="PPAT_bact"/>
    <property type="match status" value="1"/>
</dbReference>
<dbReference type="InterPro" id="IPR004821">
    <property type="entry name" value="Cyt_trans-like"/>
</dbReference>
<dbReference type="InterPro" id="IPR001980">
    <property type="entry name" value="PPAT"/>
</dbReference>
<dbReference type="InterPro" id="IPR014729">
    <property type="entry name" value="Rossmann-like_a/b/a_fold"/>
</dbReference>
<dbReference type="NCBIfam" id="TIGR01510">
    <property type="entry name" value="coaD_prev_kdtB"/>
    <property type="match status" value="1"/>
</dbReference>
<dbReference type="NCBIfam" id="TIGR00125">
    <property type="entry name" value="cyt_tran_rel"/>
    <property type="match status" value="1"/>
</dbReference>
<dbReference type="PANTHER" id="PTHR21342">
    <property type="entry name" value="PHOSPHOPANTETHEINE ADENYLYLTRANSFERASE"/>
    <property type="match status" value="1"/>
</dbReference>
<dbReference type="PANTHER" id="PTHR21342:SF1">
    <property type="entry name" value="PHOSPHOPANTETHEINE ADENYLYLTRANSFERASE"/>
    <property type="match status" value="1"/>
</dbReference>
<dbReference type="Pfam" id="PF01467">
    <property type="entry name" value="CTP_transf_like"/>
    <property type="match status" value="1"/>
</dbReference>
<dbReference type="PRINTS" id="PR01020">
    <property type="entry name" value="LPSBIOSNTHSS"/>
</dbReference>
<dbReference type="SUPFAM" id="SSF52374">
    <property type="entry name" value="Nucleotidylyl transferase"/>
    <property type="match status" value="1"/>
</dbReference>
<gene>
    <name evidence="1" type="primary">coaD</name>
    <name type="ordered locus">Moth_1871</name>
</gene>
<sequence length="160" mass="17864">MKVAVYPGTFDPITNGHLDIIRRAVSIFDRVVVGVAADNYKKTLFSLEERVELVRTVTRDIPGVTVKSFSGLLVDFARREEAVAIVRGLRAVSDFEYEFQMSIMNKKLASDLETVFLMTATEYSFLSSSIIRQAASLGGCIHGLVPPEVERVLLKRYGFL</sequence>
<accession>Q2RHB8</accession>
<name>COAD_MOOTA</name>
<feature type="chain" id="PRO_1000011176" description="Phosphopantetheine adenylyltransferase">
    <location>
        <begin position="1"/>
        <end position="160"/>
    </location>
</feature>
<feature type="binding site" evidence="1">
    <location>
        <begin position="9"/>
        <end position="10"/>
    </location>
    <ligand>
        <name>ATP</name>
        <dbReference type="ChEBI" id="CHEBI:30616"/>
    </ligand>
</feature>
<feature type="binding site" evidence="1">
    <location>
        <position position="9"/>
    </location>
    <ligand>
        <name>substrate</name>
    </ligand>
</feature>
<feature type="binding site" evidence="1">
    <location>
        <position position="17"/>
    </location>
    <ligand>
        <name>ATP</name>
        <dbReference type="ChEBI" id="CHEBI:30616"/>
    </ligand>
</feature>
<feature type="binding site" evidence="1">
    <location>
        <position position="41"/>
    </location>
    <ligand>
        <name>substrate</name>
    </ligand>
</feature>
<feature type="binding site" evidence="1">
    <location>
        <position position="73"/>
    </location>
    <ligand>
        <name>substrate</name>
    </ligand>
</feature>
<feature type="binding site" evidence="1">
    <location>
        <position position="87"/>
    </location>
    <ligand>
        <name>substrate</name>
    </ligand>
</feature>
<feature type="binding site" evidence="1">
    <location>
        <begin position="88"/>
        <end position="90"/>
    </location>
    <ligand>
        <name>ATP</name>
        <dbReference type="ChEBI" id="CHEBI:30616"/>
    </ligand>
</feature>
<feature type="binding site" evidence="1">
    <location>
        <position position="98"/>
    </location>
    <ligand>
        <name>ATP</name>
        <dbReference type="ChEBI" id="CHEBI:30616"/>
    </ligand>
</feature>
<feature type="binding site" evidence="1">
    <location>
        <begin position="123"/>
        <end position="129"/>
    </location>
    <ligand>
        <name>ATP</name>
        <dbReference type="ChEBI" id="CHEBI:30616"/>
    </ligand>
</feature>
<feature type="site" description="Transition state stabilizer" evidence="1">
    <location>
        <position position="17"/>
    </location>
</feature>
<organism>
    <name type="scientific">Moorella thermoacetica (strain ATCC 39073 / JCM 9320)</name>
    <dbReference type="NCBI Taxonomy" id="264732"/>
    <lineage>
        <taxon>Bacteria</taxon>
        <taxon>Bacillati</taxon>
        <taxon>Bacillota</taxon>
        <taxon>Clostridia</taxon>
        <taxon>Moorellales</taxon>
        <taxon>Moorellaceae</taxon>
        <taxon>Moorella</taxon>
    </lineage>
</organism>